<accession>A7GK31</accession>
<gene>
    <name evidence="1" type="primary">rplX</name>
    <name type="ordered locus">Bcer98_0115</name>
</gene>
<keyword id="KW-0687">Ribonucleoprotein</keyword>
<keyword id="KW-0689">Ribosomal protein</keyword>
<keyword id="KW-0694">RNA-binding</keyword>
<keyword id="KW-0699">rRNA-binding</keyword>
<proteinExistence type="inferred from homology"/>
<organism>
    <name type="scientific">Bacillus cytotoxicus (strain DSM 22905 / CIP 110041 / 391-98 / NVH 391-98)</name>
    <dbReference type="NCBI Taxonomy" id="315749"/>
    <lineage>
        <taxon>Bacteria</taxon>
        <taxon>Bacillati</taxon>
        <taxon>Bacillota</taxon>
        <taxon>Bacilli</taxon>
        <taxon>Bacillales</taxon>
        <taxon>Bacillaceae</taxon>
        <taxon>Bacillus</taxon>
        <taxon>Bacillus cereus group</taxon>
    </lineage>
</organism>
<name>RL24_BACCN</name>
<feature type="chain" id="PRO_1000086469" description="Large ribosomal subunit protein uL24">
    <location>
        <begin position="1"/>
        <end position="103"/>
    </location>
</feature>
<comment type="function">
    <text evidence="1">One of two assembly initiator proteins, it binds directly to the 5'-end of the 23S rRNA, where it nucleates assembly of the 50S subunit.</text>
</comment>
<comment type="function">
    <text evidence="1">One of the proteins that surrounds the polypeptide exit tunnel on the outside of the subunit.</text>
</comment>
<comment type="subunit">
    <text evidence="1">Part of the 50S ribosomal subunit.</text>
</comment>
<comment type="similarity">
    <text evidence="1">Belongs to the universal ribosomal protein uL24 family.</text>
</comment>
<dbReference type="EMBL" id="CP000764">
    <property type="protein sequence ID" value="ABS20489.1"/>
    <property type="molecule type" value="Genomic_DNA"/>
</dbReference>
<dbReference type="RefSeq" id="WP_011983255.1">
    <property type="nucleotide sequence ID" value="NC_009674.1"/>
</dbReference>
<dbReference type="SMR" id="A7GK31"/>
<dbReference type="STRING" id="315749.Bcer98_0115"/>
<dbReference type="GeneID" id="33895436"/>
<dbReference type="KEGG" id="bcy:Bcer98_0115"/>
<dbReference type="eggNOG" id="COG0198">
    <property type="taxonomic scope" value="Bacteria"/>
</dbReference>
<dbReference type="HOGENOM" id="CLU_093315_2_0_9"/>
<dbReference type="OrthoDB" id="9807419at2"/>
<dbReference type="Proteomes" id="UP000002300">
    <property type="component" value="Chromosome"/>
</dbReference>
<dbReference type="GO" id="GO:1990904">
    <property type="term" value="C:ribonucleoprotein complex"/>
    <property type="evidence" value="ECO:0007669"/>
    <property type="project" value="UniProtKB-KW"/>
</dbReference>
<dbReference type="GO" id="GO:0005840">
    <property type="term" value="C:ribosome"/>
    <property type="evidence" value="ECO:0007669"/>
    <property type="project" value="UniProtKB-KW"/>
</dbReference>
<dbReference type="GO" id="GO:0019843">
    <property type="term" value="F:rRNA binding"/>
    <property type="evidence" value="ECO:0007669"/>
    <property type="project" value="UniProtKB-UniRule"/>
</dbReference>
<dbReference type="GO" id="GO:0003735">
    <property type="term" value="F:structural constituent of ribosome"/>
    <property type="evidence" value="ECO:0007669"/>
    <property type="project" value="InterPro"/>
</dbReference>
<dbReference type="GO" id="GO:0006412">
    <property type="term" value="P:translation"/>
    <property type="evidence" value="ECO:0007669"/>
    <property type="project" value="UniProtKB-UniRule"/>
</dbReference>
<dbReference type="CDD" id="cd06089">
    <property type="entry name" value="KOW_RPL26"/>
    <property type="match status" value="1"/>
</dbReference>
<dbReference type="FunFam" id="2.30.30.30:FF:000004">
    <property type="entry name" value="50S ribosomal protein L24"/>
    <property type="match status" value="1"/>
</dbReference>
<dbReference type="Gene3D" id="2.30.30.30">
    <property type="match status" value="1"/>
</dbReference>
<dbReference type="HAMAP" id="MF_01326_B">
    <property type="entry name" value="Ribosomal_uL24_B"/>
    <property type="match status" value="1"/>
</dbReference>
<dbReference type="InterPro" id="IPR005824">
    <property type="entry name" value="KOW"/>
</dbReference>
<dbReference type="InterPro" id="IPR014722">
    <property type="entry name" value="Rib_uL2_dom2"/>
</dbReference>
<dbReference type="InterPro" id="IPR003256">
    <property type="entry name" value="Ribosomal_uL24"/>
</dbReference>
<dbReference type="InterPro" id="IPR005825">
    <property type="entry name" value="Ribosomal_uL24_CS"/>
</dbReference>
<dbReference type="InterPro" id="IPR041988">
    <property type="entry name" value="Ribosomal_uL24_KOW"/>
</dbReference>
<dbReference type="InterPro" id="IPR008991">
    <property type="entry name" value="Translation_prot_SH3-like_sf"/>
</dbReference>
<dbReference type="NCBIfam" id="TIGR01079">
    <property type="entry name" value="rplX_bact"/>
    <property type="match status" value="1"/>
</dbReference>
<dbReference type="PANTHER" id="PTHR12903">
    <property type="entry name" value="MITOCHONDRIAL RIBOSOMAL PROTEIN L24"/>
    <property type="match status" value="1"/>
</dbReference>
<dbReference type="Pfam" id="PF00467">
    <property type="entry name" value="KOW"/>
    <property type="match status" value="1"/>
</dbReference>
<dbReference type="Pfam" id="PF17136">
    <property type="entry name" value="ribosomal_L24"/>
    <property type="match status" value="1"/>
</dbReference>
<dbReference type="SMART" id="SM00739">
    <property type="entry name" value="KOW"/>
    <property type="match status" value="1"/>
</dbReference>
<dbReference type="SUPFAM" id="SSF50104">
    <property type="entry name" value="Translation proteins SH3-like domain"/>
    <property type="match status" value="1"/>
</dbReference>
<dbReference type="PROSITE" id="PS01108">
    <property type="entry name" value="RIBOSOMAL_L24"/>
    <property type="match status" value="1"/>
</dbReference>
<protein>
    <recommendedName>
        <fullName evidence="1">Large ribosomal subunit protein uL24</fullName>
    </recommendedName>
    <alternativeName>
        <fullName evidence="2">50S ribosomal protein L24</fullName>
    </alternativeName>
</protein>
<reference key="1">
    <citation type="journal article" date="2008" name="Chem. Biol. Interact.">
        <title>Extending the Bacillus cereus group genomics to putative food-borne pathogens of different toxicity.</title>
        <authorList>
            <person name="Lapidus A."/>
            <person name="Goltsman E."/>
            <person name="Auger S."/>
            <person name="Galleron N."/>
            <person name="Segurens B."/>
            <person name="Dossat C."/>
            <person name="Land M.L."/>
            <person name="Broussolle V."/>
            <person name="Brillard J."/>
            <person name="Guinebretiere M.-H."/>
            <person name="Sanchis V."/>
            <person name="Nguen-the C."/>
            <person name="Lereclus D."/>
            <person name="Richardson P."/>
            <person name="Wincker P."/>
            <person name="Weissenbach J."/>
            <person name="Ehrlich S.D."/>
            <person name="Sorokin A."/>
        </authorList>
    </citation>
    <scope>NUCLEOTIDE SEQUENCE [LARGE SCALE GENOMIC DNA]</scope>
    <source>
        <strain>DSM 22905 / CIP 110041 / 391-98 / NVH 391-98</strain>
    </source>
</reference>
<evidence type="ECO:0000255" key="1">
    <source>
        <dbReference type="HAMAP-Rule" id="MF_01326"/>
    </source>
</evidence>
<evidence type="ECO:0000305" key="2"/>
<sequence>MHVKKGDKVQVITGKDKGKQGVILVAFPKENRVIVEGVNIVKKHSKPSQLNPQGGIITKEAPIHVSNVMPLDPKTGEPTRVGYKVEDGKKVRIAKKSGELLDK</sequence>